<geneLocation type="mitochondrion"/>
<protein>
    <recommendedName>
        <fullName>Cytochrome b</fullName>
    </recommendedName>
    <alternativeName>
        <fullName>Complex III subunit 3</fullName>
    </alternativeName>
    <alternativeName>
        <fullName>Complex III subunit III</fullName>
    </alternativeName>
    <alternativeName>
        <fullName>Cytochrome b-c1 complex subunit 3</fullName>
    </alternativeName>
    <alternativeName>
        <fullName>Ubiquinol-cytochrome-c reductase complex cytochrome b subunit</fullName>
    </alternativeName>
</protein>
<reference key="1">
    <citation type="journal article" date="1998" name="J. Zool. (Lond.)">
        <title>Phylogenetic relationships of otters (Carnivora: Mustelidae) based on mitochondrial cytochrome b sequences.</title>
        <authorList>
            <person name="Koepfli K.-P."/>
            <person name="Wayne R.K."/>
        </authorList>
    </citation>
    <scope>NUCLEOTIDE SEQUENCE [GENOMIC DNA]</scope>
</reference>
<organism>
    <name type="scientific">Pekania pennanti</name>
    <name type="common">Fisher</name>
    <name type="synonym">Martes pennanti</name>
    <dbReference type="NCBI Taxonomy" id="76720"/>
    <lineage>
        <taxon>Eukaryota</taxon>
        <taxon>Metazoa</taxon>
        <taxon>Chordata</taxon>
        <taxon>Craniata</taxon>
        <taxon>Vertebrata</taxon>
        <taxon>Euteleostomi</taxon>
        <taxon>Mammalia</taxon>
        <taxon>Eutheria</taxon>
        <taxon>Laurasiatheria</taxon>
        <taxon>Carnivora</taxon>
        <taxon>Caniformia</taxon>
        <taxon>Musteloidea</taxon>
        <taxon>Mustelidae</taxon>
        <taxon>Guloninae</taxon>
        <taxon>Pekania</taxon>
    </lineage>
</organism>
<name>CYB_PEKPE</name>
<comment type="function">
    <text evidence="2">Component of the ubiquinol-cytochrome c reductase complex (complex III or cytochrome b-c1 complex) that is part of the mitochondrial respiratory chain. The b-c1 complex mediates electron transfer from ubiquinol to cytochrome c. Contributes to the generation of a proton gradient across the mitochondrial membrane that is then used for ATP synthesis.</text>
</comment>
<comment type="cofactor">
    <cofactor evidence="2">
        <name>heme b</name>
        <dbReference type="ChEBI" id="CHEBI:60344"/>
    </cofactor>
    <text evidence="2">Binds 2 heme b groups non-covalently.</text>
</comment>
<comment type="subunit">
    <text evidence="2">The cytochrome bc1 complex contains 11 subunits: 3 respiratory subunits (MT-CYB, CYC1 and UQCRFS1), 2 core proteins (UQCRC1 and UQCRC2) and 6 low-molecular weight proteins (UQCRH/QCR6, UQCRB/QCR7, UQCRQ/QCR8, UQCR10/QCR9, UQCR11/QCR10 and a cleavage product of UQCRFS1). This cytochrome bc1 complex then forms a dimer.</text>
</comment>
<comment type="subcellular location">
    <subcellularLocation>
        <location evidence="2">Mitochondrion inner membrane</location>
        <topology evidence="2">Multi-pass membrane protein</topology>
    </subcellularLocation>
</comment>
<comment type="miscellaneous">
    <text evidence="1">Heme 1 (or BL or b562) is low-potential and absorbs at about 562 nm, and heme 2 (or BH or b566) is high-potential and absorbs at about 566 nm.</text>
</comment>
<comment type="similarity">
    <text evidence="3 4">Belongs to the cytochrome b family.</text>
</comment>
<comment type="caution">
    <text evidence="2">The full-length protein contains only eight transmembrane helices, not nine as predicted by bioinformatics tools.</text>
</comment>
<evidence type="ECO:0000250" key="1"/>
<evidence type="ECO:0000250" key="2">
    <source>
        <dbReference type="UniProtKB" id="P00157"/>
    </source>
</evidence>
<evidence type="ECO:0000255" key="3">
    <source>
        <dbReference type="PROSITE-ProRule" id="PRU00967"/>
    </source>
</evidence>
<evidence type="ECO:0000255" key="4">
    <source>
        <dbReference type="PROSITE-ProRule" id="PRU00968"/>
    </source>
</evidence>
<dbReference type="EMBL" id="AF057131">
    <property type="protein sequence ID" value="AAC33711.1"/>
    <property type="molecule type" value="Genomic_DNA"/>
</dbReference>
<dbReference type="RefSeq" id="YP_007625600.1">
    <property type="nucleotide sequence ID" value="NC_020664.1"/>
</dbReference>
<dbReference type="SMR" id="O78936"/>
<dbReference type="GeneID" id="14842122"/>
<dbReference type="CTD" id="4519"/>
<dbReference type="GO" id="GO:0005743">
    <property type="term" value="C:mitochondrial inner membrane"/>
    <property type="evidence" value="ECO:0007669"/>
    <property type="project" value="UniProtKB-SubCell"/>
</dbReference>
<dbReference type="GO" id="GO:0045275">
    <property type="term" value="C:respiratory chain complex III"/>
    <property type="evidence" value="ECO:0007669"/>
    <property type="project" value="InterPro"/>
</dbReference>
<dbReference type="GO" id="GO:0046872">
    <property type="term" value="F:metal ion binding"/>
    <property type="evidence" value="ECO:0007669"/>
    <property type="project" value="UniProtKB-KW"/>
</dbReference>
<dbReference type="GO" id="GO:0008121">
    <property type="term" value="F:ubiquinol-cytochrome-c reductase activity"/>
    <property type="evidence" value="ECO:0007669"/>
    <property type="project" value="InterPro"/>
</dbReference>
<dbReference type="GO" id="GO:0006122">
    <property type="term" value="P:mitochondrial electron transport, ubiquinol to cytochrome c"/>
    <property type="evidence" value="ECO:0007669"/>
    <property type="project" value="TreeGrafter"/>
</dbReference>
<dbReference type="CDD" id="cd00290">
    <property type="entry name" value="cytochrome_b_C"/>
    <property type="match status" value="1"/>
</dbReference>
<dbReference type="CDD" id="cd00284">
    <property type="entry name" value="Cytochrome_b_N"/>
    <property type="match status" value="1"/>
</dbReference>
<dbReference type="FunFam" id="1.20.810.10:FF:000002">
    <property type="entry name" value="Cytochrome b"/>
    <property type="match status" value="1"/>
</dbReference>
<dbReference type="Gene3D" id="1.20.810.10">
    <property type="entry name" value="Cytochrome Bc1 Complex, Chain C"/>
    <property type="match status" value="1"/>
</dbReference>
<dbReference type="InterPro" id="IPR005798">
    <property type="entry name" value="Cyt_b/b6_C"/>
</dbReference>
<dbReference type="InterPro" id="IPR036150">
    <property type="entry name" value="Cyt_b/b6_C_sf"/>
</dbReference>
<dbReference type="InterPro" id="IPR005797">
    <property type="entry name" value="Cyt_b/b6_N"/>
</dbReference>
<dbReference type="InterPro" id="IPR027387">
    <property type="entry name" value="Cytb/b6-like_sf"/>
</dbReference>
<dbReference type="InterPro" id="IPR030689">
    <property type="entry name" value="Cytochrome_b"/>
</dbReference>
<dbReference type="InterPro" id="IPR048260">
    <property type="entry name" value="Cytochrome_b_C_euk/bac"/>
</dbReference>
<dbReference type="InterPro" id="IPR048259">
    <property type="entry name" value="Cytochrome_b_N_euk/bac"/>
</dbReference>
<dbReference type="InterPro" id="IPR016174">
    <property type="entry name" value="Di-haem_cyt_TM"/>
</dbReference>
<dbReference type="PANTHER" id="PTHR19271">
    <property type="entry name" value="CYTOCHROME B"/>
    <property type="match status" value="1"/>
</dbReference>
<dbReference type="PANTHER" id="PTHR19271:SF16">
    <property type="entry name" value="CYTOCHROME B"/>
    <property type="match status" value="1"/>
</dbReference>
<dbReference type="Pfam" id="PF00032">
    <property type="entry name" value="Cytochrom_B_C"/>
    <property type="match status" value="1"/>
</dbReference>
<dbReference type="Pfam" id="PF00033">
    <property type="entry name" value="Cytochrome_B"/>
    <property type="match status" value="1"/>
</dbReference>
<dbReference type="PIRSF" id="PIRSF038885">
    <property type="entry name" value="COB"/>
    <property type="match status" value="1"/>
</dbReference>
<dbReference type="SUPFAM" id="SSF81648">
    <property type="entry name" value="a domain/subunit of cytochrome bc1 complex (Ubiquinol-cytochrome c reductase)"/>
    <property type="match status" value="1"/>
</dbReference>
<dbReference type="SUPFAM" id="SSF81342">
    <property type="entry name" value="Transmembrane di-heme cytochromes"/>
    <property type="match status" value="1"/>
</dbReference>
<dbReference type="PROSITE" id="PS51003">
    <property type="entry name" value="CYTB_CTER"/>
    <property type="match status" value="1"/>
</dbReference>
<dbReference type="PROSITE" id="PS51002">
    <property type="entry name" value="CYTB_NTER"/>
    <property type="match status" value="1"/>
</dbReference>
<proteinExistence type="inferred from homology"/>
<sequence>MTNIRKTHPLAKIINNSFIDLPAPSNISAWWNFGSLLGVCLILQILTGLFLAMHYTSDTTTAFSSVTHICRDVNYGWIIRYMHANGASMFFICLFLHVGRGLYYGSYMYPETWNIGIILLFAVMATAFMGYVLPWGQMSFWGATVITNLLSAIPYIGTNLVEWIWGGFSVDKATLTRFFAFHFILPFIILALAAVHLLFLHETGSNNPSGIPSDSDKIPFHPYYTIKDILGGLFLVLVLMMLVLFSPDLLGDPDNYIPANPLNTPPHIKPEWYFLFAYAILRSIPNKLGGVLALIFSILILAIIPLLHTSKQRGMMFRPLSQCLFWLLVADLLTLTWIGGQPVEHPFIIIGQLASILYFAILLVFMPIISIIENNLLKW</sequence>
<accession>O78936</accession>
<gene>
    <name type="primary">MT-CYB</name>
    <name type="synonym">COB</name>
    <name type="synonym">CYTB</name>
    <name type="synonym">MTCYB</name>
</gene>
<keyword id="KW-0249">Electron transport</keyword>
<keyword id="KW-0349">Heme</keyword>
<keyword id="KW-0408">Iron</keyword>
<keyword id="KW-0472">Membrane</keyword>
<keyword id="KW-0479">Metal-binding</keyword>
<keyword id="KW-0496">Mitochondrion</keyword>
<keyword id="KW-0999">Mitochondrion inner membrane</keyword>
<keyword id="KW-0679">Respiratory chain</keyword>
<keyword id="KW-0812">Transmembrane</keyword>
<keyword id="KW-1133">Transmembrane helix</keyword>
<keyword id="KW-0813">Transport</keyword>
<keyword id="KW-0830">Ubiquinone</keyword>
<feature type="chain" id="PRO_0000061160" description="Cytochrome b">
    <location>
        <begin position="1"/>
        <end position="379"/>
    </location>
</feature>
<feature type="transmembrane region" description="Helical" evidence="2">
    <location>
        <begin position="33"/>
        <end position="53"/>
    </location>
</feature>
<feature type="transmembrane region" description="Helical" evidence="2">
    <location>
        <begin position="77"/>
        <end position="98"/>
    </location>
</feature>
<feature type="transmembrane region" description="Helical" evidence="2">
    <location>
        <begin position="113"/>
        <end position="133"/>
    </location>
</feature>
<feature type="transmembrane region" description="Helical" evidence="2">
    <location>
        <begin position="178"/>
        <end position="198"/>
    </location>
</feature>
<feature type="transmembrane region" description="Helical" evidence="2">
    <location>
        <begin position="226"/>
        <end position="246"/>
    </location>
</feature>
<feature type="transmembrane region" description="Helical" evidence="2">
    <location>
        <begin position="288"/>
        <end position="308"/>
    </location>
</feature>
<feature type="transmembrane region" description="Helical" evidence="2">
    <location>
        <begin position="320"/>
        <end position="340"/>
    </location>
</feature>
<feature type="transmembrane region" description="Helical" evidence="2">
    <location>
        <begin position="347"/>
        <end position="367"/>
    </location>
</feature>
<feature type="binding site" description="axial binding residue" evidence="2">
    <location>
        <position position="83"/>
    </location>
    <ligand>
        <name>heme b</name>
        <dbReference type="ChEBI" id="CHEBI:60344"/>
        <label>b562</label>
    </ligand>
    <ligandPart>
        <name>Fe</name>
        <dbReference type="ChEBI" id="CHEBI:18248"/>
    </ligandPart>
</feature>
<feature type="binding site" description="axial binding residue" evidence="2">
    <location>
        <position position="97"/>
    </location>
    <ligand>
        <name>heme b</name>
        <dbReference type="ChEBI" id="CHEBI:60344"/>
        <label>b566</label>
    </ligand>
    <ligandPart>
        <name>Fe</name>
        <dbReference type="ChEBI" id="CHEBI:18248"/>
    </ligandPart>
</feature>
<feature type="binding site" description="axial binding residue" evidence="2">
    <location>
        <position position="182"/>
    </location>
    <ligand>
        <name>heme b</name>
        <dbReference type="ChEBI" id="CHEBI:60344"/>
        <label>b562</label>
    </ligand>
    <ligandPart>
        <name>Fe</name>
        <dbReference type="ChEBI" id="CHEBI:18248"/>
    </ligandPart>
</feature>
<feature type="binding site" description="axial binding residue" evidence="2">
    <location>
        <position position="196"/>
    </location>
    <ligand>
        <name>heme b</name>
        <dbReference type="ChEBI" id="CHEBI:60344"/>
        <label>b566</label>
    </ligand>
    <ligandPart>
        <name>Fe</name>
        <dbReference type="ChEBI" id="CHEBI:18248"/>
    </ligandPart>
</feature>
<feature type="binding site" evidence="2">
    <location>
        <position position="201"/>
    </location>
    <ligand>
        <name>a ubiquinone</name>
        <dbReference type="ChEBI" id="CHEBI:16389"/>
    </ligand>
</feature>